<reference key="1">
    <citation type="journal article" date="2009" name="Proc. Natl. Acad. Sci. U.S.A.">
        <title>Biogeography of the Sulfolobus islandicus pan-genome.</title>
        <authorList>
            <person name="Reno M.L."/>
            <person name="Held N.L."/>
            <person name="Fields C.J."/>
            <person name="Burke P.V."/>
            <person name="Whitaker R.J."/>
        </authorList>
    </citation>
    <scope>NUCLEOTIDE SEQUENCE [LARGE SCALE GENOMIC DNA]</scope>
    <source>
        <strain>Y.N.15.51 / Yellowstone #2</strain>
    </source>
</reference>
<gene>
    <name evidence="1" type="primary">pfdB</name>
    <name type="ordered locus">YN1551_1437</name>
</gene>
<keyword id="KW-0143">Chaperone</keyword>
<keyword id="KW-0963">Cytoplasm</keyword>
<feature type="chain" id="PRO_1000205022" description="Prefoldin subunit beta">
    <location>
        <begin position="1"/>
        <end position="126"/>
    </location>
</feature>
<name>PFDB_SACI1</name>
<evidence type="ECO:0000255" key="1">
    <source>
        <dbReference type="HAMAP-Rule" id="MF_00307"/>
    </source>
</evidence>
<sequence length="126" mass="14557">MAEKLPPEVQAQLAKFQQLKDQLDRLLLEKSTIENELREINKVLEELSVLNADATIYKIVGNLLVKSDKTSVEKELNDRKELLELRSRTYQKQESILRKQLEDLQAKINEMLSKYYPQGGQTGIKA</sequence>
<organism>
    <name type="scientific">Saccharolobus islandicus (strain Y.N.15.51 / Yellowstone #2)</name>
    <name type="common">Sulfolobus islandicus</name>
    <dbReference type="NCBI Taxonomy" id="419942"/>
    <lineage>
        <taxon>Archaea</taxon>
        <taxon>Thermoproteota</taxon>
        <taxon>Thermoprotei</taxon>
        <taxon>Sulfolobales</taxon>
        <taxon>Sulfolobaceae</taxon>
        <taxon>Saccharolobus</taxon>
    </lineage>
</organism>
<proteinExistence type="inferred from homology"/>
<protein>
    <recommendedName>
        <fullName evidence="1">Prefoldin subunit beta</fullName>
    </recommendedName>
    <alternativeName>
        <fullName evidence="1">GimC subunit beta</fullName>
    </alternativeName>
</protein>
<dbReference type="EMBL" id="CP001404">
    <property type="protein sequence ID" value="ACP48528.1"/>
    <property type="molecule type" value="Genomic_DNA"/>
</dbReference>
<dbReference type="RefSeq" id="WP_012711409.1">
    <property type="nucleotide sequence ID" value="NC_012623.1"/>
</dbReference>
<dbReference type="SMR" id="C3NHB8"/>
<dbReference type="KEGG" id="sin:YN1551_1437"/>
<dbReference type="HOGENOM" id="CLU_131909_2_1_2"/>
<dbReference type="Proteomes" id="UP000006818">
    <property type="component" value="Chromosome"/>
</dbReference>
<dbReference type="GO" id="GO:0005737">
    <property type="term" value="C:cytoplasm"/>
    <property type="evidence" value="ECO:0007669"/>
    <property type="project" value="UniProtKB-SubCell"/>
</dbReference>
<dbReference type="GO" id="GO:0016272">
    <property type="term" value="C:prefoldin complex"/>
    <property type="evidence" value="ECO:0007669"/>
    <property type="project" value="UniProtKB-UniRule"/>
</dbReference>
<dbReference type="GO" id="GO:0051087">
    <property type="term" value="F:protein-folding chaperone binding"/>
    <property type="evidence" value="ECO:0007669"/>
    <property type="project" value="TreeGrafter"/>
</dbReference>
<dbReference type="GO" id="GO:0051082">
    <property type="term" value="F:unfolded protein binding"/>
    <property type="evidence" value="ECO:0007669"/>
    <property type="project" value="UniProtKB-UniRule"/>
</dbReference>
<dbReference type="GO" id="GO:0051131">
    <property type="term" value="P:chaperone-mediated protein complex assembly"/>
    <property type="evidence" value="ECO:0007669"/>
    <property type="project" value="TreeGrafter"/>
</dbReference>
<dbReference type="GO" id="GO:0006457">
    <property type="term" value="P:protein folding"/>
    <property type="evidence" value="ECO:0007669"/>
    <property type="project" value="UniProtKB-UniRule"/>
</dbReference>
<dbReference type="CDD" id="cd23162">
    <property type="entry name" value="Prefoldin_beta_GimC"/>
    <property type="match status" value="1"/>
</dbReference>
<dbReference type="FunFam" id="1.10.287.370:FF:000013">
    <property type="entry name" value="Prefoldin subunit beta"/>
    <property type="match status" value="1"/>
</dbReference>
<dbReference type="Gene3D" id="1.10.287.370">
    <property type="match status" value="1"/>
</dbReference>
<dbReference type="HAMAP" id="MF_00307">
    <property type="entry name" value="PfdB"/>
    <property type="match status" value="1"/>
</dbReference>
<dbReference type="InterPro" id="IPR002777">
    <property type="entry name" value="PFD_beta-like"/>
</dbReference>
<dbReference type="InterPro" id="IPR012713">
    <property type="entry name" value="PfdB"/>
</dbReference>
<dbReference type="InterPro" id="IPR009053">
    <property type="entry name" value="Prefoldin"/>
</dbReference>
<dbReference type="NCBIfam" id="TIGR02338">
    <property type="entry name" value="gimC_beta"/>
    <property type="match status" value="1"/>
</dbReference>
<dbReference type="PANTHER" id="PTHR21431">
    <property type="entry name" value="PREFOLDIN SUBUNIT 6"/>
    <property type="match status" value="1"/>
</dbReference>
<dbReference type="PANTHER" id="PTHR21431:SF0">
    <property type="entry name" value="PREFOLDIN SUBUNIT 6"/>
    <property type="match status" value="1"/>
</dbReference>
<dbReference type="Pfam" id="PF01920">
    <property type="entry name" value="Prefoldin_2"/>
    <property type="match status" value="1"/>
</dbReference>
<dbReference type="SUPFAM" id="SSF46579">
    <property type="entry name" value="Prefoldin"/>
    <property type="match status" value="1"/>
</dbReference>
<accession>C3NHB8</accession>
<comment type="function">
    <text evidence="1">Molecular chaperone capable of stabilizing a range of proteins. Seems to fulfill an ATP-independent, HSP70-like function in archaeal de novo protein folding.</text>
</comment>
<comment type="subunit">
    <text evidence="1">Heterohexamer of two alpha and four beta subunits.</text>
</comment>
<comment type="subcellular location">
    <subcellularLocation>
        <location evidence="1">Cytoplasm</location>
    </subcellularLocation>
</comment>
<comment type="similarity">
    <text evidence="1">Belongs to the prefoldin subunit beta family.</text>
</comment>